<dbReference type="EMBL" id="S70434">
    <property type="protein sequence ID" value="AAB30787.1"/>
    <property type="molecule type" value="mRNA"/>
</dbReference>
<dbReference type="EMBL" id="AF229809">
    <property type="protein sequence ID" value="AAK00755.1"/>
    <property type="molecule type" value="Genomic_DNA"/>
</dbReference>
<dbReference type="PIR" id="JC2242">
    <property type="entry name" value="JC2242"/>
</dbReference>
<dbReference type="RefSeq" id="NP_001009874.3">
    <property type="nucleotide sequence ID" value="NM_001009874.3"/>
</dbReference>
<dbReference type="SMR" id="P41691"/>
<dbReference type="STRING" id="9685.ENSFCAP00000015333"/>
<dbReference type="PaxDb" id="9685-ENSFCAP00000015333"/>
<dbReference type="Ensembl" id="ENSFCAT00000060819.1">
    <property type="protein sequence ID" value="ENSFCAP00000051253.1"/>
    <property type="gene ID" value="ENSFCAG00000018168.5"/>
</dbReference>
<dbReference type="GeneID" id="493974"/>
<dbReference type="KEGG" id="fca:493974"/>
<dbReference type="CTD" id="4636"/>
<dbReference type="VGNC" id="VGNC:68385">
    <property type="gene designation" value="MYL5"/>
</dbReference>
<dbReference type="eggNOG" id="KOG0031">
    <property type="taxonomic scope" value="Eukaryota"/>
</dbReference>
<dbReference type="GeneTree" id="ENSGT00940000163023"/>
<dbReference type="HOGENOM" id="CLU_061288_9_0_1"/>
<dbReference type="InParanoid" id="P41691"/>
<dbReference type="OrthoDB" id="429467at2759"/>
<dbReference type="Proteomes" id="UP000011712">
    <property type="component" value="Chromosome B1"/>
</dbReference>
<dbReference type="Bgee" id="ENSFCAG00000018168">
    <property type="expression patterns" value="Expressed in adult mammalian kidney and 9 other cell types or tissues"/>
</dbReference>
<dbReference type="GO" id="GO:0005737">
    <property type="term" value="C:cytoplasm"/>
    <property type="evidence" value="ECO:0000318"/>
    <property type="project" value="GO_Central"/>
</dbReference>
<dbReference type="GO" id="GO:0016459">
    <property type="term" value="C:myosin complex"/>
    <property type="evidence" value="ECO:0007669"/>
    <property type="project" value="UniProtKB-KW"/>
</dbReference>
<dbReference type="GO" id="GO:0005509">
    <property type="term" value="F:calcium ion binding"/>
    <property type="evidence" value="ECO:0000318"/>
    <property type="project" value="GO_Central"/>
</dbReference>
<dbReference type="FunFam" id="1.10.238.10:FF:000010">
    <property type="entry name" value="Myosin regulatory light chain 2, atrial isoform"/>
    <property type="match status" value="1"/>
</dbReference>
<dbReference type="FunFam" id="1.10.238.10:FF:000007">
    <property type="entry name" value="Putative myosin regulatory light chain sqh"/>
    <property type="match status" value="1"/>
</dbReference>
<dbReference type="Gene3D" id="1.10.238.10">
    <property type="entry name" value="EF-hand"/>
    <property type="match status" value="2"/>
</dbReference>
<dbReference type="InterPro" id="IPR011992">
    <property type="entry name" value="EF-hand-dom_pair"/>
</dbReference>
<dbReference type="InterPro" id="IPR018247">
    <property type="entry name" value="EF_Hand_1_Ca_BS"/>
</dbReference>
<dbReference type="InterPro" id="IPR002048">
    <property type="entry name" value="EF_hand_dom"/>
</dbReference>
<dbReference type="InterPro" id="IPR050403">
    <property type="entry name" value="Myosin_RLC"/>
</dbReference>
<dbReference type="PANTHER" id="PTHR23049">
    <property type="entry name" value="MYOSIN REGULATORY LIGHT CHAIN 2"/>
    <property type="match status" value="1"/>
</dbReference>
<dbReference type="Pfam" id="PF13499">
    <property type="entry name" value="EF-hand_7"/>
    <property type="match status" value="1"/>
</dbReference>
<dbReference type="SMART" id="SM00054">
    <property type="entry name" value="EFh"/>
    <property type="match status" value="2"/>
</dbReference>
<dbReference type="SUPFAM" id="SSF47473">
    <property type="entry name" value="EF-hand"/>
    <property type="match status" value="1"/>
</dbReference>
<dbReference type="PROSITE" id="PS00018">
    <property type="entry name" value="EF_HAND_1"/>
    <property type="match status" value="1"/>
</dbReference>
<dbReference type="PROSITE" id="PS50222">
    <property type="entry name" value="EF_HAND_2"/>
    <property type="match status" value="3"/>
</dbReference>
<organism>
    <name type="scientific">Felis catus</name>
    <name type="common">Cat</name>
    <name type="synonym">Felis silvestris catus</name>
    <dbReference type="NCBI Taxonomy" id="9685"/>
    <lineage>
        <taxon>Eukaryota</taxon>
        <taxon>Metazoa</taxon>
        <taxon>Chordata</taxon>
        <taxon>Craniata</taxon>
        <taxon>Vertebrata</taxon>
        <taxon>Euteleostomi</taxon>
        <taxon>Mammalia</taxon>
        <taxon>Eutheria</taxon>
        <taxon>Laurasiatheria</taxon>
        <taxon>Carnivora</taxon>
        <taxon>Feliformia</taxon>
        <taxon>Felidae</taxon>
        <taxon>Felinae</taxon>
        <taxon>Felis</taxon>
    </lineage>
</organism>
<sequence length="173" mass="19453">MASRKTKKKEGGGLRAQRASSNVFSNFEQTQIQEFKEAFTLMDQNRDGFIDKEDLKDTYASLGKTNIKDDELDAMLKEASGPINFTMFLNMFGAKLTGTDAEETILNAFKMLDPEGKGSINKDYIKRLLMSQADKMTAEEVDQMFQFATIDAAGNLDYKALSYVLTHGEEKEE</sequence>
<name>MYL5_FELCA</name>
<accession>P41691</accession>
<accession>Q9BGM1</accession>
<gene>
    <name type="primary">MYL5</name>
</gene>
<keyword id="KW-0106">Calcium</keyword>
<keyword id="KW-0479">Metal-binding</keyword>
<keyword id="KW-0505">Motor protein</keyword>
<keyword id="KW-0514">Muscle protein</keyword>
<keyword id="KW-0518">Myosin</keyword>
<keyword id="KW-1185">Reference proteome</keyword>
<keyword id="KW-0677">Repeat</keyword>
<evidence type="ECO:0000250" key="1"/>
<evidence type="ECO:0000255" key="2">
    <source>
        <dbReference type="PROSITE-ProRule" id="PRU00448"/>
    </source>
</evidence>
<evidence type="ECO:0000256" key="3">
    <source>
        <dbReference type="SAM" id="MobiDB-lite"/>
    </source>
</evidence>
<evidence type="ECO:0000305" key="4"/>
<proteinExistence type="evidence at transcript level"/>
<comment type="subunit">
    <text>Myosin is a hexamer of 2 heavy chains and 4 light chains.</text>
</comment>
<comment type="tissue specificity">
    <text>Jaw-closing muscles.</text>
</comment>
<comment type="miscellaneous">
    <text evidence="1">This chain binds calcium.</text>
</comment>
<feature type="chain" id="PRO_0000198744" description="Myosin light chain 5">
    <location>
        <begin position="1"/>
        <end position="173"/>
    </location>
</feature>
<feature type="domain" description="EF-hand 1" evidence="2">
    <location>
        <begin position="30"/>
        <end position="65"/>
    </location>
</feature>
<feature type="domain" description="EF-hand 2" evidence="2">
    <location>
        <begin position="100"/>
        <end position="135"/>
    </location>
</feature>
<feature type="domain" description="EF-hand 3" evidence="2">
    <location>
        <begin position="136"/>
        <end position="171"/>
    </location>
</feature>
<feature type="region of interest" description="Disordered" evidence="3">
    <location>
        <begin position="1"/>
        <end position="22"/>
    </location>
</feature>
<feature type="binding site" evidence="2">
    <location>
        <position position="43"/>
    </location>
    <ligand>
        <name>Ca(2+)</name>
        <dbReference type="ChEBI" id="CHEBI:29108"/>
    </ligand>
</feature>
<feature type="binding site" evidence="2">
    <location>
        <position position="45"/>
    </location>
    <ligand>
        <name>Ca(2+)</name>
        <dbReference type="ChEBI" id="CHEBI:29108"/>
    </ligand>
</feature>
<feature type="binding site" evidence="2">
    <location>
        <position position="47"/>
    </location>
    <ligand>
        <name>Ca(2+)</name>
        <dbReference type="ChEBI" id="CHEBI:29108"/>
    </ligand>
</feature>
<feature type="binding site" evidence="2">
    <location>
        <position position="54"/>
    </location>
    <ligand>
        <name>Ca(2+)</name>
        <dbReference type="ChEBI" id="CHEBI:29108"/>
    </ligand>
</feature>
<feature type="sequence conflict" description="In Ref. 1; AAB30787." evidence="4" ref="1">
    <original>R</original>
    <variation>P</variation>
    <location>
        <position position="127"/>
    </location>
</feature>
<feature type="sequence conflict" description="In Ref. 1; AAB30787." evidence="4" ref="1">
    <original>Q</original>
    <variation>H</variation>
    <location>
        <position position="132"/>
    </location>
</feature>
<protein>
    <recommendedName>
        <fullName>Myosin light chain 5</fullName>
    </recommendedName>
    <alternativeName>
        <fullName>Myosin regulatory light chain 5</fullName>
    </alternativeName>
    <alternativeName>
        <fullName>Superfast myosin regulatory light chain 2</fullName>
        <shortName>MYLC2</shortName>
        <shortName>MyLC-2</shortName>
    </alternativeName>
</protein>
<reference key="1">
    <citation type="journal article" date="1994" name="Biochem. Biophys. Res. Commun.">
        <title>Isolation and structure of cat superfast myosin light chain-2 cDNA and evidence for the identity of its human homologue.</title>
        <authorList>
            <person name="Qin H."/>
            <person name="Morris B.J."/>
            <person name="Hoh J.F.Y."/>
        </authorList>
    </citation>
    <scope>NUCLEOTIDE SEQUENCE [MRNA]</scope>
    <source>
        <tissue>Masseter muscle</tissue>
    </source>
</reference>
<reference key="2">
    <citation type="submission" date="2000-01" db="EMBL/GenBank/DDBJ databases">
        <authorList>
            <person name="Hsu M.K.H."/>
            <person name="Hoh J.F.Y."/>
        </authorList>
    </citation>
    <scope>NUCLEOTIDE SEQUENCE</scope>
</reference>